<sequence>MVAASGTQRTRTVGLARWIVYAGSVFAGAWLATQLFYLVQIALWSFINPGSTAFMRTDAWWLSHDKPPAQIQHQWVPYDQISRNLKRALIASEDATFATNNGYDVDAILQAWEKNKARGHIVAGGSTITQQLARNLFLSREKSYIRKGQELIITWMLETVLDKERIFEIYLNSVEWGRGVYGAEAAARYYYRIPASRLGAWQSARLAVMLPKPRWFDAHRGSAYQAQRAAVIARRMGAAELPQSQ</sequence>
<reference key="1">
    <citation type="submission" date="2007-03" db="EMBL/GenBank/DDBJ databases">
        <title>Complete sequence of chromosome 1 of Burkholderia vietnamiensis G4.</title>
        <authorList>
            <consortium name="US DOE Joint Genome Institute"/>
            <person name="Copeland A."/>
            <person name="Lucas S."/>
            <person name="Lapidus A."/>
            <person name="Barry K."/>
            <person name="Detter J.C."/>
            <person name="Glavina del Rio T."/>
            <person name="Hammon N."/>
            <person name="Israni S."/>
            <person name="Dalin E."/>
            <person name="Tice H."/>
            <person name="Pitluck S."/>
            <person name="Chain P."/>
            <person name="Malfatti S."/>
            <person name="Shin M."/>
            <person name="Vergez L."/>
            <person name="Schmutz J."/>
            <person name="Larimer F."/>
            <person name="Land M."/>
            <person name="Hauser L."/>
            <person name="Kyrpides N."/>
            <person name="Tiedje J."/>
            <person name="Richardson P."/>
        </authorList>
    </citation>
    <scope>NUCLEOTIDE SEQUENCE [LARGE SCALE GENOMIC DNA]</scope>
    <source>
        <strain>G4 / LMG 22486</strain>
    </source>
</reference>
<keyword id="KW-0997">Cell inner membrane</keyword>
<keyword id="KW-1003">Cell membrane</keyword>
<keyword id="KW-0133">Cell shape</keyword>
<keyword id="KW-0961">Cell wall biogenesis/degradation</keyword>
<keyword id="KW-0328">Glycosyltransferase</keyword>
<keyword id="KW-0472">Membrane</keyword>
<keyword id="KW-0573">Peptidoglycan synthesis</keyword>
<keyword id="KW-0808">Transferase</keyword>
<keyword id="KW-0812">Transmembrane</keyword>
<keyword id="KW-1133">Transmembrane helix</keyword>
<organism>
    <name type="scientific">Burkholderia vietnamiensis (strain G4 / LMG 22486)</name>
    <name type="common">Burkholderia cepacia (strain R1808)</name>
    <dbReference type="NCBI Taxonomy" id="269482"/>
    <lineage>
        <taxon>Bacteria</taxon>
        <taxon>Pseudomonadati</taxon>
        <taxon>Pseudomonadota</taxon>
        <taxon>Betaproteobacteria</taxon>
        <taxon>Burkholderiales</taxon>
        <taxon>Burkholderiaceae</taxon>
        <taxon>Burkholderia</taxon>
        <taxon>Burkholderia cepacia complex</taxon>
    </lineage>
</organism>
<gene>
    <name evidence="1" type="primary">mtgA</name>
    <name type="ordered locus">Bcep1808_0588</name>
</gene>
<evidence type="ECO:0000255" key="1">
    <source>
        <dbReference type="HAMAP-Rule" id="MF_00766"/>
    </source>
</evidence>
<comment type="function">
    <text evidence="1">Peptidoglycan polymerase that catalyzes glycan chain elongation from lipid-linked precursors.</text>
</comment>
<comment type="catalytic activity">
    <reaction evidence="1">
        <text>[GlcNAc-(1-&gt;4)-Mur2Ac(oyl-L-Ala-gamma-D-Glu-L-Lys-D-Ala-D-Ala)](n)-di-trans,octa-cis-undecaprenyl diphosphate + beta-D-GlcNAc-(1-&gt;4)-Mur2Ac(oyl-L-Ala-gamma-D-Glu-L-Lys-D-Ala-D-Ala)-di-trans,octa-cis-undecaprenyl diphosphate = [GlcNAc-(1-&gt;4)-Mur2Ac(oyl-L-Ala-gamma-D-Glu-L-Lys-D-Ala-D-Ala)](n+1)-di-trans,octa-cis-undecaprenyl diphosphate + di-trans,octa-cis-undecaprenyl diphosphate + H(+)</text>
        <dbReference type="Rhea" id="RHEA:23708"/>
        <dbReference type="Rhea" id="RHEA-COMP:9602"/>
        <dbReference type="Rhea" id="RHEA-COMP:9603"/>
        <dbReference type="ChEBI" id="CHEBI:15378"/>
        <dbReference type="ChEBI" id="CHEBI:58405"/>
        <dbReference type="ChEBI" id="CHEBI:60033"/>
        <dbReference type="ChEBI" id="CHEBI:78435"/>
        <dbReference type="EC" id="2.4.99.28"/>
    </reaction>
</comment>
<comment type="pathway">
    <text evidence="1">Cell wall biogenesis; peptidoglycan biosynthesis.</text>
</comment>
<comment type="subcellular location">
    <subcellularLocation>
        <location evidence="1">Cell inner membrane</location>
        <topology evidence="1">Single-pass membrane protein</topology>
    </subcellularLocation>
</comment>
<comment type="similarity">
    <text evidence="1">Belongs to the glycosyltransferase 51 family.</text>
</comment>
<feature type="chain" id="PRO_1000017302" description="Biosynthetic peptidoglycan transglycosylase">
    <location>
        <begin position="1"/>
        <end position="245"/>
    </location>
</feature>
<feature type="transmembrane region" description="Helical" evidence="1">
    <location>
        <begin position="13"/>
        <end position="35"/>
    </location>
</feature>
<accession>A4JBE7</accession>
<dbReference type="EC" id="2.4.99.28" evidence="1"/>
<dbReference type="EMBL" id="CP000614">
    <property type="protein sequence ID" value="ABO53600.1"/>
    <property type="molecule type" value="Genomic_DNA"/>
</dbReference>
<dbReference type="SMR" id="A4JBE7"/>
<dbReference type="CAZy" id="GT51">
    <property type="family name" value="Glycosyltransferase Family 51"/>
</dbReference>
<dbReference type="KEGG" id="bvi:Bcep1808_0588"/>
<dbReference type="eggNOG" id="COG0744">
    <property type="taxonomic scope" value="Bacteria"/>
</dbReference>
<dbReference type="HOGENOM" id="CLU_006354_1_0_4"/>
<dbReference type="UniPathway" id="UPA00219"/>
<dbReference type="Proteomes" id="UP000002287">
    <property type="component" value="Chromosome 1"/>
</dbReference>
<dbReference type="GO" id="GO:0009274">
    <property type="term" value="C:peptidoglycan-based cell wall"/>
    <property type="evidence" value="ECO:0007669"/>
    <property type="project" value="InterPro"/>
</dbReference>
<dbReference type="GO" id="GO:0005886">
    <property type="term" value="C:plasma membrane"/>
    <property type="evidence" value="ECO:0007669"/>
    <property type="project" value="UniProtKB-SubCell"/>
</dbReference>
<dbReference type="GO" id="GO:0016763">
    <property type="term" value="F:pentosyltransferase activity"/>
    <property type="evidence" value="ECO:0007669"/>
    <property type="project" value="InterPro"/>
</dbReference>
<dbReference type="GO" id="GO:0008955">
    <property type="term" value="F:peptidoglycan glycosyltransferase activity"/>
    <property type="evidence" value="ECO:0007669"/>
    <property type="project" value="UniProtKB-UniRule"/>
</dbReference>
<dbReference type="GO" id="GO:0071555">
    <property type="term" value="P:cell wall organization"/>
    <property type="evidence" value="ECO:0007669"/>
    <property type="project" value="UniProtKB-KW"/>
</dbReference>
<dbReference type="GO" id="GO:0009252">
    <property type="term" value="P:peptidoglycan biosynthetic process"/>
    <property type="evidence" value="ECO:0007669"/>
    <property type="project" value="UniProtKB-UniRule"/>
</dbReference>
<dbReference type="GO" id="GO:0008360">
    <property type="term" value="P:regulation of cell shape"/>
    <property type="evidence" value="ECO:0007669"/>
    <property type="project" value="UniProtKB-KW"/>
</dbReference>
<dbReference type="Gene3D" id="1.10.3810.10">
    <property type="entry name" value="Biosynthetic peptidoglycan transglycosylase-like"/>
    <property type="match status" value="1"/>
</dbReference>
<dbReference type="HAMAP" id="MF_00766">
    <property type="entry name" value="PGT_MtgA"/>
    <property type="match status" value="1"/>
</dbReference>
<dbReference type="InterPro" id="IPR001264">
    <property type="entry name" value="Glyco_trans_51"/>
</dbReference>
<dbReference type="InterPro" id="IPR023346">
    <property type="entry name" value="Lysozyme-like_dom_sf"/>
</dbReference>
<dbReference type="InterPro" id="IPR036950">
    <property type="entry name" value="PBP_transglycosylase"/>
</dbReference>
<dbReference type="InterPro" id="IPR011812">
    <property type="entry name" value="Pep_trsgly"/>
</dbReference>
<dbReference type="NCBIfam" id="TIGR02070">
    <property type="entry name" value="mono_pep_trsgly"/>
    <property type="match status" value="1"/>
</dbReference>
<dbReference type="PANTHER" id="PTHR30400:SF0">
    <property type="entry name" value="BIOSYNTHETIC PEPTIDOGLYCAN TRANSGLYCOSYLASE"/>
    <property type="match status" value="1"/>
</dbReference>
<dbReference type="PANTHER" id="PTHR30400">
    <property type="entry name" value="MONOFUNCTIONAL BIOSYNTHETIC PEPTIDOGLYCAN TRANSGLYCOSYLASE"/>
    <property type="match status" value="1"/>
</dbReference>
<dbReference type="Pfam" id="PF00912">
    <property type="entry name" value="Transgly"/>
    <property type="match status" value="1"/>
</dbReference>
<dbReference type="SUPFAM" id="SSF53955">
    <property type="entry name" value="Lysozyme-like"/>
    <property type="match status" value="1"/>
</dbReference>
<proteinExistence type="inferred from homology"/>
<name>MTGA_BURVG</name>
<protein>
    <recommendedName>
        <fullName evidence="1">Biosynthetic peptidoglycan transglycosylase</fullName>
        <ecNumber evidence="1">2.4.99.28</ecNumber>
    </recommendedName>
    <alternativeName>
        <fullName evidence="1">Glycan polymerase</fullName>
    </alternativeName>
    <alternativeName>
        <fullName evidence="1">Peptidoglycan glycosyltransferase MtgA</fullName>
        <shortName evidence="1">PGT</shortName>
    </alternativeName>
</protein>